<reference key="1">
    <citation type="journal article" date="1999" name="DNA Res.">
        <title>Structural analysis of Arabidopsis thaliana chromosome 5. IX. Sequence features of the regions of 1,011,550 bp covered by seventeen P1 and TAC clones.</title>
        <authorList>
            <person name="Kaneko T."/>
            <person name="Katoh T."/>
            <person name="Sato S."/>
            <person name="Nakamura Y."/>
            <person name="Asamizu E."/>
            <person name="Kotani H."/>
            <person name="Miyajima N."/>
            <person name="Tabata S."/>
        </authorList>
    </citation>
    <scope>NUCLEOTIDE SEQUENCE [LARGE SCALE GENOMIC DNA]</scope>
    <source>
        <strain>cv. Columbia</strain>
    </source>
</reference>
<reference key="2">
    <citation type="journal article" date="2017" name="Plant J.">
        <title>Araport11: a complete reannotation of the Arabidopsis thaliana reference genome.</title>
        <authorList>
            <person name="Cheng C.Y."/>
            <person name="Krishnakumar V."/>
            <person name="Chan A.P."/>
            <person name="Thibaud-Nissen F."/>
            <person name="Schobel S."/>
            <person name="Town C.D."/>
        </authorList>
    </citation>
    <scope>GENOME REANNOTATION</scope>
    <source>
        <strain>cv. Columbia</strain>
    </source>
</reference>
<reference key="3">
    <citation type="journal article" date="2003" name="Science">
        <title>Empirical analysis of transcriptional activity in the Arabidopsis genome.</title>
        <authorList>
            <person name="Yamada K."/>
            <person name="Lim J."/>
            <person name="Dale J.M."/>
            <person name="Chen H."/>
            <person name="Shinn P."/>
            <person name="Palm C.J."/>
            <person name="Southwick A.M."/>
            <person name="Wu H.C."/>
            <person name="Kim C.J."/>
            <person name="Nguyen M."/>
            <person name="Pham P.K."/>
            <person name="Cheuk R.F."/>
            <person name="Karlin-Newmann G."/>
            <person name="Liu S.X."/>
            <person name="Lam B."/>
            <person name="Sakano H."/>
            <person name="Wu T."/>
            <person name="Yu G."/>
            <person name="Miranda M."/>
            <person name="Quach H.L."/>
            <person name="Tripp M."/>
            <person name="Chang C.H."/>
            <person name="Lee J.M."/>
            <person name="Toriumi M.J."/>
            <person name="Chan M.M."/>
            <person name="Tang C.C."/>
            <person name="Onodera C.S."/>
            <person name="Deng J.M."/>
            <person name="Akiyama K."/>
            <person name="Ansari Y."/>
            <person name="Arakawa T."/>
            <person name="Banh J."/>
            <person name="Banno F."/>
            <person name="Bowser L."/>
            <person name="Brooks S.Y."/>
            <person name="Carninci P."/>
            <person name="Chao Q."/>
            <person name="Choy N."/>
            <person name="Enju A."/>
            <person name="Goldsmith A.D."/>
            <person name="Gurjal M."/>
            <person name="Hansen N.F."/>
            <person name="Hayashizaki Y."/>
            <person name="Johnson-Hopson C."/>
            <person name="Hsuan V.W."/>
            <person name="Iida K."/>
            <person name="Karnes M."/>
            <person name="Khan S."/>
            <person name="Koesema E."/>
            <person name="Ishida J."/>
            <person name="Jiang P.X."/>
            <person name="Jones T."/>
            <person name="Kawai J."/>
            <person name="Kamiya A."/>
            <person name="Meyers C."/>
            <person name="Nakajima M."/>
            <person name="Narusaka M."/>
            <person name="Seki M."/>
            <person name="Sakurai T."/>
            <person name="Satou M."/>
            <person name="Tamse R."/>
            <person name="Vaysberg M."/>
            <person name="Wallender E.K."/>
            <person name="Wong C."/>
            <person name="Yamamura Y."/>
            <person name="Yuan S."/>
            <person name="Shinozaki K."/>
            <person name="Davis R.W."/>
            <person name="Theologis A."/>
            <person name="Ecker J.R."/>
        </authorList>
    </citation>
    <scope>NUCLEOTIDE SEQUENCE [LARGE SCALE MRNA]</scope>
    <source>
        <strain>cv. Columbia</strain>
    </source>
</reference>
<gene>
    <name type="ordered locus">At5g45440</name>
    <name type="ORF">MFC19.11</name>
</gene>
<dbReference type="EMBL" id="AB018113">
    <property type="protein sequence ID" value="BAB09172.1"/>
    <property type="molecule type" value="Genomic_DNA"/>
</dbReference>
<dbReference type="EMBL" id="CP002688">
    <property type="protein sequence ID" value="AED95252.1"/>
    <property type="molecule type" value="Genomic_DNA"/>
</dbReference>
<dbReference type="EMBL" id="BT006374">
    <property type="protein sequence ID" value="AAP21182.1"/>
    <property type="molecule type" value="mRNA"/>
</dbReference>
<dbReference type="RefSeq" id="NP_199357.1">
    <property type="nucleotide sequence ID" value="NM_123912.3"/>
</dbReference>
<dbReference type="SMR" id="Q9FHJ2"/>
<dbReference type="BioGRID" id="19829">
    <property type="interactions" value="1"/>
</dbReference>
<dbReference type="FunCoup" id="Q9FHJ2">
    <property type="interactions" value="5"/>
</dbReference>
<dbReference type="IntAct" id="Q9FHJ2">
    <property type="interactions" value="1"/>
</dbReference>
<dbReference type="STRING" id="3702.Q9FHJ2"/>
<dbReference type="PaxDb" id="3702-AT5G45440.1"/>
<dbReference type="ProteomicsDB" id="224332"/>
<dbReference type="DNASU" id="834580"/>
<dbReference type="EnsemblPlants" id="AT5G45440.1">
    <property type="protein sequence ID" value="AT5G45440.1"/>
    <property type="gene ID" value="AT5G45440"/>
</dbReference>
<dbReference type="GeneID" id="834580"/>
<dbReference type="Gramene" id="AT5G45440.1">
    <property type="protein sequence ID" value="AT5G45440.1"/>
    <property type="gene ID" value="AT5G45440"/>
</dbReference>
<dbReference type="KEGG" id="ath:AT5G45440"/>
<dbReference type="Araport" id="AT5G45440"/>
<dbReference type="TAIR" id="AT5G45440"/>
<dbReference type="eggNOG" id="ENOG502RPBY">
    <property type="taxonomic scope" value="Eukaryota"/>
</dbReference>
<dbReference type="HOGENOM" id="CLU_740453_0_0_1"/>
<dbReference type="InParanoid" id="Q9FHJ2"/>
<dbReference type="OMA" id="WISLWYE"/>
<dbReference type="PhylomeDB" id="Q9FHJ2"/>
<dbReference type="PRO" id="PR:Q9FHJ2"/>
<dbReference type="Proteomes" id="UP000006548">
    <property type="component" value="Chromosome 5"/>
</dbReference>
<dbReference type="ExpressionAtlas" id="Q9FHJ2">
    <property type="expression patterns" value="baseline and differential"/>
</dbReference>
<dbReference type="GO" id="GO:0043531">
    <property type="term" value="F:ADP binding"/>
    <property type="evidence" value="ECO:0007669"/>
    <property type="project" value="InterPro"/>
</dbReference>
<dbReference type="GO" id="GO:0005524">
    <property type="term" value="F:ATP binding"/>
    <property type="evidence" value="ECO:0007669"/>
    <property type="project" value="UniProtKB-KW"/>
</dbReference>
<dbReference type="GO" id="GO:0006952">
    <property type="term" value="P:defense response"/>
    <property type="evidence" value="ECO:0007669"/>
    <property type="project" value="UniProtKB-KW"/>
</dbReference>
<dbReference type="Gene3D" id="3.40.50.300">
    <property type="entry name" value="P-loop containing nucleotide triphosphate hydrolases"/>
    <property type="match status" value="1"/>
</dbReference>
<dbReference type="InterPro" id="IPR002182">
    <property type="entry name" value="NB-ARC"/>
</dbReference>
<dbReference type="InterPro" id="IPR027417">
    <property type="entry name" value="P-loop_NTPase"/>
</dbReference>
<dbReference type="PANTHER" id="PTHR36766:SF70">
    <property type="entry name" value="DISEASE RESISTANCE PROTEIN RGA4"/>
    <property type="match status" value="1"/>
</dbReference>
<dbReference type="PANTHER" id="PTHR36766">
    <property type="entry name" value="PLANT BROAD-SPECTRUM MILDEW RESISTANCE PROTEIN RPW8"/>
    <property type="match status" value="1"/>
</dbReference>
<dbReference type="Pfam" id="PF00931">
    <property type="entry name" value="NB-ARC"/>
    <property type="match status" value="1"/>
</dbReference>
<dbReference type="SUPFAM" id="SSF52540">
    <property type="entry name" value="P-loop containing nucleoside triphosphate hydrolases"/>
    <property type="match status" value="1"/>
</dbReference>
<organism>
    <name type="scientific">Arabidopsis thaliana</name>
    <name type="common">Mouse-ear cress</name>
    <dbReference type="NCBI Taxonomy" id="3702"/>
    <lineage>
        <taxon>Eukaryota</taxon>
        <taxon>Viridiplantae</taxon>
        <taxon>Streptophyta</taxon>
        <taxon>Embryophyta</taxon>
        <taxon>Tracheophyta</taxon>
        <taxon>Spermatophyta</taxon>
        <taxon>Magnoliopsida</taxon>
        <taxon>eudicotyledons</taxon>
        <taxon>Gunneridae</taxon>
        <taxon>Pentapetalae</taxon>
        <taxon>rosids</taxon>
        <taxon>malvids</taxon>
        <taxon>Brassicales</taxon>
        <taxon>Brassicaceae</taxon>
        <taxon>Camelineae</taxon>
        <taxon>Arabidopsis</taxon>
    </lineage>
</organism>
<evidence type="ECO:0000250" key="1"/>
<evidence type="ECO:0000255" key="2"/>
<evidence type="ECO:0000256" key="3">
    <source>
        <dbReference type="SAM" id="MobiDB-lite"/>
    </source>
</evidence>
<evidence type="ECO:0000305" key="4"/>
<feature type="chain" id="PRO_0000212766" description="Probable disease resistance protein At5g45440">
    <location>
        <begin position="1"/>
        <end position="346"/>
    </location>
</feature>
<feature type="domain" description="NB-ARC">
    <location>
        <begin position="38"/>
        <end position="116"/>
    </location>
</feature>
<feature type="region of interest" description="Disordered" evidence="3">
    <location>
        <begin position="315"/>
        <end position="346"/>
    </location>
</feature>
<feature type="binding site" evidence="2">
    <location>
        <begin position="85"/>
        <end position="92"/>
    </location>
    <ligand>
        <name>ATP</name>
        <dbReference type="ChEBI" id="CHEBI:30616"/>
    </ligand>
</feature>
<proteinExistence type="evidence at transcript level"/>
<sequence>MTQEDSSRGLTSVGRVDFTNRFADRYNEWLGTTGDETKQVEDRVETDSGLPGHDIYGFENEIKSLQHFLLDQKSYKLFKSLVVVGEYGVGKTALCQQIFNDYDVRNAYAPRIWVSMHSNESKEGLDGKICVLKTILKGLGVEESMFESIHREVVEEVSNRQEAGEIDGETAKEKEISALLYALHLNLRWKKYLIVFDDVQEIDNWDEKLDAKLNEGEKWGKYLSDGFPKGSGGRVIYTTRDENLAKNLVVQKHEIHRLWPLSDSNSVWKIYEAMIQKREKESPRNDKKCIDELMNKSRGLPLAARLLAELDPMLFDDGKANQNGSKDGKTDSVDNPNSEESKTKPL</sequence>
<protein>
    <recommendedName>
        <fullName>Probable disease resistance protein At5g45440</fullName>
    </recommendedName>
</protein>
<keyword id="KW-0067">ATP-binding</keyword>
<keyword id="KW-0547">Nucleotide-binding</keyword>
<keyword id="KW-0611">Plant defense</keyword>
<keyword id="KW-1185">Reference proteome</keyword>
<accession>Q9FHJ2</accession>
<comment type="function">
    <text evidence="1">Possible disease resistance protein.</text>
</comment>
<comment type="caution">
    <text evidence="4">Although strongly related to the NB-LRR family, it is shorter and lacks the LRR repeats that are present in other proteins of the family.</text>
</comment>
<comment type="online information" name="NIB-LRRS">
    <link uri="http://niblrrs.ucdavis.edu"/>
    <text>Functional and comparative genomics of disease resistance gene homologs</text>
</comment>
<name>DRL34_ARATH</name>